<gene>
    <name type="primary">Rps3a</name>
    <name type="synonym">Fte-1</name>
    <name type="synonym">Fte1</name>
</gene>
<protein>
    <recommendedName>
        <fullName evidence="6">Small ribosomal subunit protein eS1</fullName>
    </recommendedName>
    <alternativeName>
        <fullName evidence="3">40S ribosomal protein S3a</fullName>
    </alternativeName>
    <alternativeName>
        <fullName>V-fos transformation effector protein</fullName>
    </alternativeName>
    <component>
        <recommendedName>
            <fullName>40S ribosomal protein S3b</fullName>
        </recommendedName>
    </component>
</protein>
<name>RS3A_RAT</name>
<keyword id="KW-0002">3D-structure</keyword>
<keyword id="KW-0007">Acetylation</keyword>
<keyword id="KW-0013">ADP-ribosylation</keyword>
<keyword id="KW-0963">Cytoplasm</keyword>
<keyword id="KW-0221">Differentiation</keyword>
<keyword id="KW-0903">Direct protein sequencing</keyword>
<keyword id="KW-1017">Isopeptide bond</keyword>
<keyword id="KW-0539">Nucleus</keyword>
<keyword id="KW-0597">Phosphoprotein</keyword>
<keyword id="KW-1185">Reference proteome</keyword>
<keyword id="KW-0687">Ribonucleoprotein</keyword>
<keyword id="KW-0689">Ribosomal protein</keyword>
<keyword id="KW-0832">Ubl conjugation</keyword>
<accession>P49242</accession>
<accession>P33443</accession>
<dbReference type="EMBL" id="M84716">
    <property type="protein sequence ID" value="AAA42335.1"/>
    <property type="molecule type" value="mRNA"/>
</dbReference>
<dbReference type="EMBL" id="X75161">
    <property type="protein sequence ID" value="CAA53004.1"/>
    <property type="molecule type" value="mRNA"/>
</dbReference>
<dbReference type="EMBL" id="BC058483">
    <property type="protein sequence ID" value="AAH58483.1"/>
    <property type="molecule type" value="mRNA"/>
</dbReference>
<dbReference type="PIR" id="JC5250">
    <property type="entry name" value="JC5250"/>
</dbReference>
<dbReference type="RefSeq" id="NP_058849.1">
    <property type="nucleotide sequence ID" value="NM_017153.1"/>
</dbReference>
<dbReference type="PDB" id="7QGG">
    <property type="method" value="EM"/>
    <property type="resolution" value="2.86 A"/>
    <property type="chains" value="SB=1-264"/>
</dbReference>
<dbReference type="PDBsum" id="7QGG"/>
<dbReference type="EMDB" id="EMD-13954"/>
<dbReference type="SMR" id="P49242"/>
<dbReference type="BioGRID" id="247958">
    <property type="interactions" value="6"/>
</dbReference>
<dbReference type="FunCoup" id="P49242">
    <property type="interactions" value="2297"/>
</dbReference>
<dbReference type="IntAct" id="P49242">
    <property type="interactions" value="9"/>
</dbReference>
<dbReference type="MINT" id="P49242"/>
<dbReference type="STRING" id="10116.ENSRNOP00000016329"/>
<dbReference type="iPTMnet" id="P49242"/>
<dbReference type="PhosphoSitePlus" id="P49242"/>
<dbReference type="jPOST" id="P49242"/>
<dbReference type="PaxDb" id="10116-ENSRNOP00000016329"/>
<dbReference type="Ensembl" id="ENSRNOT00000016329.7">
    <property type="protein sequence ID" value="ENSRNOP00000016329.3"/>
    <property type="gene ID" value="ENSRNOG00000011893.7"/>
</dbReference>
<dbReference type="GeneID" id="29288"/>
<dbReference type="KEGG" id="rno:29288"/>
<dbReference type="UCSC" id="RGD:62078">
    <property type="organism name" value="rat"/>
</dbReference>
<dbReference type="AGR" id="RGD:62078"/>
<dbReference type="CTD" id="6189"/>
<dbReference type="RGD" id="62078">
    <property type="gene designation" value="Rps3a"/>
</dbReference>
<dbReference type="eggNOG" id="KOG1628">
    <property type="taxonomic scope" value="Eukaryota"/>
</dbReference>
<dbReference type="GeneTree" id="ENSGT00390000018433"/>
<dbReference type="HOGENOM" id="CLU_062507_0_1_1"/>
<dbReference type="InParanoid" id="P49242"/>
<dbReference type="OMA" id="TRFKGHE"/>
<dbReference type="OrthoDB" id="9834376at2759"/>
<dbReference type="PhylomeDB" id="P49242"/>
<dbReference type="TreeFam" id="TF300037"/>
<dbReference type="Reactome" id="R-RNO-156827">
    <property type="pathway name" value="L13a-mediated translational silencing of Ceruloplasmin expression"/>
</dbReference>
<dbReference type="Reactome" id="R-RNO-1799339">
    <property type="pathway name" value="SRP-dependent cotranslational protein targeting to membrane"/>
</dbReference>
<dbReference type="Reactome" id="R-RNO-6791226">
    <property type="pathway name" value="Major pathway of rRNA processing in the nucleolus and cytosol"/>
</dbReference>
<dbReference type="Reactome" id="R-RNO-72649">
    <property type="pathway name" value="Translation initiation complex formation"/>
</dbReference>
<dbReference type="Reactome" id="R-RNO-72689">
    <property type="pathway name" value="Formation of a pool of free 40S subunits"/>
</dbReference>
<dbReference type="Reactome" id="R-RNO-72695">
    <property type="pathway name" value="Formation of the ternary complex, and subsequently, the 43S complex"/>
</dbReference>
<dbReference type="Reactome" id="R-RNO-72702">
    <property type="pathway name" value="Ribosomal scanning and start codon recognition"/>
</dbReference>
<dbReference type="Reactome" id="R-RNO-72706">
    <property type="pathway name" value="GTP hydrolysis and joining of the 60S ribosomal subunit"/>
</dbReference>
<dbReference type="Reactome" id="R-RNO-975956">
    <property type="pathway name" value="Nonsense Mediated Decay (NMD) independent of the Exon Junction Complex (EJC)"/>
</dbReference>
<dbReference type="Reactome" id="R-RNO-975957">
    <property type="pathway name" value="Nonsense Mediated Decay (NMD) enhanced by the Exon Junction Complex (EJC)"/>
</dbReference>
<dbReference type="PRO" id="PR:P49242"/>
<dbReference type="Proteomes" id="UP000002494">
    <property type="component" value="Chromosome 2"/>
</dbReference>
<dbReference type="Bgee" id="ENSRNOG00000011893">
    <property type="expression patterns" value="Expressed in thymus and 19 other cell types or tissues"/>
</dbReference>
<dbReference type="GO" id="GO:0005737">
    <property type="term" value="C:cytoplasm"/>
    <property type="evidence" value="ECO:0000266"/>
    <property type="project" value="RGD"/>
</dbReference>
<dbReference type="GO" id="GO:0005829">
    <property type="term" value="C:cytosol"/>
    <property type="evidence" value="ECO:0000250"/>
    <property type="project" value="UniProtKB"/>
</dbReference>
<dbReference type="GO" id="GO:0022626">
    <property type="term" value="C:cytosolic ribosome"/>
    <property type="evidence" value="ECO:0000266"/>
    <property type="project" value="RGD"/>
</dbReference>
<dbReference type="GO" id="GO:0022627">
    <property type="term" value="C:cytosolic small ribosomal subunit"/>
    <property type="evidence" value="ECO:0000314"/>
    <property type="project" value="RGD"/>
</dbReference>
<dbReference type="GO" id="GO:0005730">
    <property type="term" value="C:nucleolus"/>
    <property type="evidence" value="ECO:0007669"/>
    <property type="project" value="UniProtKB-SubCell"/>
</dbReference>
<dbReference type="GO" id="GO:0005634">
    <property type="term" value="C:nucleus"/>
    <property type="evidence" value="ECO:0000250"/>
    <property type="project" value="UniProtKB"/>
</dbReference>
<dbReference type="GO" id="GO:1990904">
    <property type="term" value="C:ribonucleoprotein complex"/>
    <property type="evidence" value="ECO:0000250"/>
    <property type="project" value="UniProtKB"/>
</dbReference>
<dbReference type="GO" id="GO:0015935">
    <property type="term" value="C:small ribosomal subunit"/>
    <property type="evidence" value="ECO:0000314"/>
    <property type="project" value="RGD"/>
</dbReference>
<dbReference type="GO" id="GO:0032040">
    <property type="term" value="C:small-subunit processome"/>
    <property type="evidence" value="ECO:0000250"/>
    <property type="project" value="UniProtKB"/>
</dbReference>
<dbReference type="GO" id="GO:0045202">
    <property type="term" value="C:synapse"/>
    <property type="evidence" value="ECO:0000266"/>
    <property type="project" value="RGD"/>
</dbReference>
<dbReference type="GO" id="GO:0048027">
    <property type="term" value="F:mRNA 5'-UTR binding"/>
    <property type="evidence" value="ECO:0000266"/>
    <property type="project" value="RGD"/>
</dbReference>
<dbReference type="GO" id="GO:0003729">
    <property type="term" value="F:mRNA binding"/>
    <property type="evidence" value="ECO:0000314"/>
    <property type="project" value="RGD"/>
</dbReference>
<dbReference type="GO" id="GO:0003735">
    <property type="term" value="F:structural constituent of ribosome"/>
    <property type="evidence" value="ECO:0000266"/>
    <property type="project" value="RGD"/>
</dbReference>
<dbReference type="GO" id="GO:0031369">
    <property type="term" value="F:translation initiation factor binding"/>
    <property type="evidence" value="ECO:0000353"/>
    <property type="project" value="UniProtKB"/>
</dbReference>
<dbReference type="GO" id="GO:0030154">
    <property type="term" value="P:cell differentiation"/>
    <property type="evidence" value="ECO:0007669"/>
    <property type="project" value="UniProtKB-KW"/>
</dbReference>
<dbReference type="GO" id="GO:0043066">
    <property type="term" value="P:negative regulation of apoptotic process"/>
    <property type="evidence" value="ECO:0000250"/>
    <property type="project" value="UniProtKB"/>
</dbReference>
<dbReference type="GO" id="GO:0048146">
    <property type="term" value="P:positive regulation of fibroblast proliferation"/>
    <property type="evidence" value="ECO:0000315"/>
    <property type="project" value="RGD"/>
</dbReference>
<dbReference type="GO" id="GO:0045727">
    <property type="term" value="P:positive regulation of translation"/>
    <property type="evidence" value="ECO:0000314"/>
    <property type="project" value="RGD"/>
</dbReference>
<dbReference type="GO" id="GO:0045471">
    <property type="term" value="P:response to ethanol"/>
    <property type="evidence" value="ECO:0000270"/>
    <property type="project" value="RGD"/>
</dbReference>
<dbReference type="GO" id="GO:0042274">
    <property type="term" value="P:ribosomal small subunit biogenesis"/>
    <property type="evidence" value="ECO:0000250"/>
    <property type="project" value="UniProtKB"/>
</dbReference>
<dbReference type="GO" id="GO:0006412">
    <property type="term" value="P:translation"/>
    <property type="evidence" value="ECO:0000250"/>
    <property type="project" value="UniProtKB"/>
</dbReference>
<dbReference type="HAMAP" id="MF_03122">
    <property type="entry name" value="Ribosomal_eS1_euk"/>
    <property type="match status" value="1"/>
</dbReference>
<dbReference type="InterPro" id="IPR001593">
    <property type="entry name" value="Ribosomal_eS1"/>
</dbReference>
<dbReference type="InterPro" id="IPR018281">
    <property type="entry name" value="Ribosomal_eS1_CS"/>
</dbReference>
<dbReference type="InterPro" id="IPR027500">
    <property type="entry name" value="Ribosomal_eS1_euk"/>
</dbReference>
<dbReference type="PANTHER" id="PTHR11830">
    <property type="entry name" value="40S RIBOSOMAL PROTEIN S3A"/>
    <property type="match status" value="1"/>
</dbReference>
<dbReference type="Pfam" id="PF01015">
    <property type="entry name" value="Ribosomal_S3Ae"/>
    <property type="match status" value="1"/>
</dbReference>
<dbReference type="SMART" id="SM01397">
    <property type="entry name" value="Ribosomal_S3Ae"/>
    <property type="match status" value="1"/>
</dbReference>
<dbReference type="PROSITE" id="PS01191">
    <property type="entry name" value="RIBOSOMAL_S3AE"/>
    <property type="match status" value="1"/>
</dbReference>
<organism>
    <name type="scientific">Rattus norvegicus</name>
    <name type="common">Rat</name>
    <dbReference type="NCBI Taxonomy" id="10116"/>
    <lineage>
        <taxon>Eukaryota</taxon>
        <taxon>Metazoa</taxon>
        <taxon>Chordata</taxon>
        <taxon>Craniata</taxon>
        <taxon>Vertebrata</taxon>
        <taxon>Euteleostomi</taxon>
        <taxon>Mammalia</taxon>
        <taxon>Eutheria</taxon>
        <taxon>Euarchontoglires</taxon>
        <taxon>Glires</taxon>
        <taxon>Rodentia</taxon>
        <taxon>Myomorpha</taxon>
        <taxon>Muroidea</taxon>
        <taxon>Muridae</taxon>
        <taxon>Murinae</taxon>
        <taxon>Rattus</taxon>
    </lineage>
</organism>
<proteinExistence type="evidence at protein level"/>
<evidence type="ECO:0000250" key="1">
    <source>
        <dbReference type="UniProtKB" id="P61247"/>
    </source>
</evidence>
<evidence type="ECO:0000250" key="2">
    <source>
        <dbReference type="UniProtKB" id="P97351"/>
    </source>
</evidence>
<evidence type="ECO:0000255" key="3">
    <source>
        <dbReference type="HAMAP-Rule" id="MF_03122"/>
    </source>
</evidence>
<evidence type="ECO:0000256" key="4">
    <source>
        <dbReference type="SAM" id="MobiDB-lite"/>
    </source>
</evidence>
<evidence type="ECO:0000269" key="5">
    <source>
    </source>
</evidence>
<evidence type="ECO:0000305" key="6"/>
<comment type="function">
    <text evidence="1 3">Component of the small ribosomal subunit. The ribosome is a large ribonucleoprotein complex responsible for the synthesis of proteins in the cell. Part of the small subunit (SSU) processome, first precursor of the small eukaryotic ribosomal subunit. During the assembly of the SSU processome in the nucleolus, many ribosome biogenesis factors, an RNA chaperone and ribosomal proteins associate with the nascent pre-rRNA and work in concert to generate RNA folding, modifications, rearrangements and cleavage as well as targeted degradation of pre-ribosomal RNA by the RNA exosome (By similarity). May play a role during erythropoiesis through regulation of transcription factor DDIT3 (By similarity).</text>
</comment>
<comment type="subunit">
    <text evidence="1">Component of the small ribosomal subunit. Mature ribosomes consist of a small (40S) and a large (60S) subunit. The 40S subunit contains about 33 different proteins and 1 molecule of RNA (18S). The 60S subunit contains about 49 different proteins and 3 molecules of RNA (28S, 5.8S and 5S). Identified in a IGF2BP1-dependent mRNP granule complex containing untranslated mRNAs. Binds with high affinity to IPO4. Interacts with DDIT3. Part of the small subunit (SSU) processome, composed of more than 70 proteins and the RNA chaperone small nucleolar RNA (snoRNA) U3.</text>
</comment>
<comment type="subcellular location">
    <subcellularLocation>
        <location evidence="2 3">Cytoplasm</location>
    </subcellularLocation>
    <subcellularLocation>
        <location evidence="2 3">Nucleus</location>
    </subcellularLocation>
    <subcellularLocation>
        <location evidence="1">Nucleus</location>
        <location evidence="1">Nucleolus</location>
    </subcellularLocation>
    <text evidence="2">Localized in cytoplasmic mRNP granules containing untranslated mRNAs.</text>
</comment>
<comment type="PTM">
    <text>The protein designated S3b has the same amino acid sequence as S3a except that it lacks the C-terminal 12 residues. It is probable that S3a is converted by proteolysis, either physiologically or fortuitously, to S3b.</text>
</comment>
<comment type="PTM">
    <text evidence="1">ADP-ribosylated at Tyr-155 by PARP1 in presence of HPF1.</text>
</comment>
<comment type="mass spectrometry" mass="29815.3" error="1.4" method="Electrospray" evidence="5">
    <molecule>Small ribosomal subunit protein eS1</molecule>
</comment>
<comment type="similarity">
    <text evidence="3">Belongs to the eukaryotic ribosomal protein eS1 family.</text>
</comment>
<reference key="1">
    <citation type="journal article" date="1992" name="Proc. Natl. Acad. Sci. U.S.A.">
        <title>Fte-1, a v-fos transformation effector gene, encodes the mammalian homologue of a yeast gene involved in protein import into mitochondria.</title>
        <authorList>
            <person name="Kho C.J."/>
            <person name="Zarbl H."/>
        </authorList>
    </citation>
    <scope>NUCLEOTIDE SEQUENCE [MRNA]</scope>
</reference>
<reference key="2">
    <citation type="journal article" date="1996" name="Biochem. Biophys. Res. Commun.">
        <title>The primary structures of rat ribosomal proteins S3a (the V-Fos transformation effector) and of S3b.</title>
        <authorList>
            <person name="Chan Y.-L."/>
            <person name="Olvera J."/>
            <person name="Paz V."/>
            <person name="Wool I.G."/>
        </authorList>
    </citation>
    <scope>NUCLEOTIDE SEQUENCE [MRNA]</scope>
    <scope>PROTEIN SEQUENCE OF 24-50</scope>
    <source>
        <strain>Sprague-Dawley</strain>
        <tissue>Liver</tissue>
    </source>
</reference>
<reference key="3">
    <citation type="journal article" date="2004" name="Genome Res.">
        <title>The status, quality, and expansion of the NIH full-length cDNA project: the Mammalian Gene Collection (MGC).</title>
        <authorList>
            <consortium name="The MGC Project Team"/>
        </authorList>
    </citation>
    <scope>NUCLEOTIDE SEQUENCE [LARGE SCALE MRNA]</scope>
    <source>
        <tissue>Pituitary</tissue>
    </source>
</reference>
<reference key="4">
    <citation type="journal article" date="1977" name="J. Biol. Chem.">
        <title>Isolation of eukaryotic ribosomal proteins. Purification and characterization of the 40 S ribosomal subunit proteins Sa, Sc, S3a, S3b, S5', S9, S10, S11, S12, S14, S15, S15', S16, S17, S18, S19, S20, S21, S26, S27', and S29.</title>
        <authorList>
            <person name="Collatz E."/>
            <person name="Ulbrich N."/>
            <person name="Tsurugi K."/>
            <person name="Lightfoot H.N."/>
            <person name="MacKinlay W."/>
            <person name="Lin A."/>
            <person name="Wool I.G."/>
        </authorList>
    </citation>
    <scope>IDENTIFICATION IN SMALL RIBOSOMAL SUBUNIT</scope>
</reference>
<reference key="5">
    <citation type="journal article" date="1996" name="J. Biol. Chem.">
        <title>Mass spectrometric analysis of 40 S ribosomal proteins from Rat-1 fibroblasts.</title>
        <authorList>
            <person name="Louie D.F."/>
            <person name="Resing K.A."/>
            <person name="Lewis T.S."/>
            <person name="Ahn N.G."/>
        </authorList>
    </citation>
    <scope>MASS SPECTROMETRY</scope>
</reference>
<reference key="6">
    <citation type="journal article" date="1997" name="Gene">
        <title>The S3a ribosomal protein gene is identical to the Fte-1 (v-fos transformation effector) gene and the TNF-alpha-induced TU-11 gene, and its transcript level is altered in transformed and tumor cells.</title>
        <authorList>
            <person name="Lecomte F."/>
            <person name="Szpirer J."/>
            <person name="Szpirer C."/>
        </authorList>
    </citation>
    <scope>GENE NAME</scope>
</reference>
<feature type="chain" id="PRO_0000030637" description="Small ribosomal subunit protein eS1">
    <location>
        <begin position="1"/>
        <end position="264"/>
    </location>
</feature>
<feature type="chain" id="PRO_0000030638" description="40S ribosomal protein S3b">
    <location>
        <begin position="1"/>
        <end position="252"/>
    </location>
</feature>
<feature type="region of interest" description="Disordered" evidence="4">
    <location>
        <begin position="232"/>
        <end position="264"/>
    </location>
</feature>
<feature type="compositionally biased region" description="Basic and acidic residues" evidence="4">
    <location>
        <begin position="242"/>
        <end position="255"/>
    </location>
</feature>
<feature type="modified residue" description="N6-acetyllysine; alternate" evidence="1">
    <location>
        <position position="34"/>
    </location>
</feature>
<feature type="modified residue" description="N6-acetyllysine" evidence="2">
    <location>
        <position position="56"/>
    </location>
</feature>
<feature type="modified residue" description="ADP-ribosyltyrosine" evidence="1">
    <location>
        <position position="155"/>
    </location>
</feature>
<feature type="modified residue" description="Phosphoserine" evidence="2">
    <location>
        <position position="237"/>
    </location>
</feature>
<feature type="modified residue" description="N6-acetyllysine; alternate" evidence="1">
    <location>
        <position position="249"/>
    </location>
</feature>
<feature type="modified residue" description="Phosphotyrosine" evidence="1">
    <location>
        <position position="256"/>
    </location>
</feature>
<feature type="modified residue" description="Phosphoserine" evidence="1">
    <location>
        <position position="263"/>
    </location>
</feature>
<feature type="cross-link" description="Glycyl lysine isopeptide (Lys-Gly) (interchain with G-Cter in SUMO2); alternate" evidence="1">
    <location>
        <position position="34"/>
    </location>
</feature>
<feature type="cross-link" description="Glycyl lysine isopeptide (Lys-Gly) (interchain with G-Cter in SUMO2); alternate" evidence="1">
    <location>
        <position position="249"/>
    </location>
</feature>
<sequence length="264" mass="29945">MAVGKNKRLTKGGKKGAKKKVVDPFSKKDWYDVKAPAMFNIRNIGKTLVTRTQGTKIASDGLKGRVFEVSLADLQNDEVAFRKFKLITEDVQGKNCLTNFHGMDLTRDKMCSMVKKWQTMIEAHVDVKTTDGYLLRLFCVGFTKKRNNQIRKTSYAQHQQVRQIRKKMMEIMTREVQTNDLKEVVNKLIPDSIGKDIEKACQSIYPLHDVFVRKVKMLKKPKFELGKLMELHGEGGSSGKTTGDETGAKVERADGYEPPVQESV</sequence>